<protein>
    <recommendedName>
        <fullName evidence="1">Probable ECA polymerase</fullName>
    </recommendedName>
</protein>
<name>WZYE_YERP3</name>
<reference key="1">
    <citation type="journal article" date="2007" name="PLoS Genet.">
        <title>The complete genome sequence of Yersinia pseudotuberculosis IP31758, the causative agent of Far East scarlet-like fever.</title>
        <authorList>
            <person name="Eppinger M."/>
            <person name="Rosovitz M.J."/>
            <person name="Fricke W.F."/>
            <person name="Rasko D.A."/>
            <person name="Kokorina G."/>
            <person name="Fayolle C."/>
            <person name="Lindler L.E."/>
            <person name="Carniel E."/>
            <person name="Ravel J."/>
        </authorList>
    </citation>
    <scope>NUCLEOTIDE SEQUENCE [LARGE SCALE GENOMIC DNA]</scope>
    <source>
        <strain>IP 31758</strain>
    </source>
</reference>
<feature type="chain" id="PRO_1000062767" description="Probable ECA polymerase">
    <location>
        <begin position="1"/>
        <end position="454"/>
    </location>
</feature>
<feature type="transmembrane region" description="Helical" evidence="1">
    <location>
        <begin position="3"/>
        <end position="23"/>
    </location>
</feature>
<feature type="transmembrane region" description="Helical" evidence="1">
    <location>
        <begin position="39"/>
        <end position="59"/>
    </location>
</feature>
<feature type="transmembrane region" description="Helical" evidence="1">
    <location>
        <begin position="61"/>
        <end position="81"/>
    </location>
</feature>
<feature type="transmembrane region" description="Helical" evidence="1">
    <location>
        <begin position="119"/>
        <end position="139"/>
    </location>
</feature>
<feature type="transmembrane region" description="Helical" evidence="1">
    <location>
        <begin position="154"/>
        <end position="174"/>
    </location>
</feature>
<feature type="transmembrane region" description="Helical" evidence="1">
    <location>
        <begin position="180"/>
        <end position="200"/>
    </location>
</feature>
<feature type="transmembrane region" description="Helical" evidence="1">
    <location>
        <begin position="201"/>
        <end position="221"/>
    </location>
</feature>
<feature type="transmembrane region" description="Helical" evidence="1">
    <location>
        <begin position="222"/>
        <end position="242"/>
    </location>
</feature>
<feature type="transmembrane region" description="Helical" evidence="1">
    <location>
        <begin position="340"/>
        <end position="360"/>
    </location>
</feature>
<feature type="transmembrane region" description="Helical" evidence="1">
    <location>
        <begin position="377"/>
        <end position="397"/>
    </location>
</feature>
<feature type="transmembrane region" description="Helical" evidence="1">
    <location>
        <begin position="409"/>
        <end position="429"/>
    </location>
</feature>
<evidence type="ECO:0000255" key="1">
    <source>
        <dbReference type="HAMAP-Rule" id="MF_01003"/>
    </source>
</evidence>
<keyword id="KW-0997">Cell inner membrane</keyword>
<keyword id="KW-1003">Cell membrane</keyword>
<keyword id="KW-0472">Membrane</keyword>
<keyword id="KW-0812">Transmembrane</keyword>
<keyword id="KW-1133">Transmembrane helix</keyword>
<sequence>MTLGQFGGLFCIYLIAVIFILTLTYQEFRRVKFNFNVLFSMLYLLTFYFGFPLTCMLVFQFGVAVVPVEYLLYAMLSATAFYGIYYVTYKTRLRQPRSQPRTPIFTMNRVETNLTWVLLALVAVGTVGIFFMQNGFLLFKLDSYSKIFSSDVSGVALKRFFYFFIPAMLVVYFLKQDMRAWFFFLASTVAFGILTYVIVGGTRANIIIAFSLFLFIGIVRGWITLWMLAAAGVFGIVGMFWLALKRYGLDVNGAEAFYTFLYLTRDTFSPWENLGLLLQNYDKIDFQGLAPIVRDFYVFIPSALWPERPDLVLNTANYFTWDVLDNHSGLAISPTLIGSLVVMGGVLFIPLGAIVVGLIIKWFDWLYEQGKAESNRYKAAILQSFCFGAVFNIIVLAREGLDSFVSRVVFFCVIFGACLVLAKLLYWLFDTAGLIKRQGIKSNRLSMPNAGNQL</sequence>
<dbReference type="EMBL" id="CP000720">
    <property type="protein sequence ID" value="ABS47564.1"/>
    <property type="molecule type" value="Genomic_DNA"/>
</dbReference>
<dbReference type="RefSeq" id="WP_012104301.1">
    <property type="nucleotide sequence ID" value="NC_009708.1"/>
</dbReference>
<dbReference type="KEGG" id="ypi:YpsIP31758_0192"/>
<dbReference type="HOGENOM" id="CLU_049711_0_0_6"/>
<dbReference type="UniPathway" id="UPA00566"/>
<dbReference type="Proteomes" id="UP000002412">
    <property type="component" value="Chromosome"/>
</dbReference>
<dbReference type="GO" id="GO:0005886">
    <property type="term" value="C:plasma membrane"/>
    <property type="evidence" value="ECO:0007669"/>
    <property type="project" value="UniProtKB-SubCell"/>
</dbReference>
<dbReference type="GO" id="GO:0009246">
    <property type="term" value="P:enterobacterial common antigen biosynthetic process"/>
    <property type="evidence" value="ECO:0007669"/>
    <property type="project" value="UniProtKB-UniRule"/>
</dbReference>
<dbReference type="HAMAP" id="MF_01003">
    <property type="entry name" value="WzyE"/>
    <property type="match status" value="1"/>
</dbReference>
<dbReference type="InterPro" id="IPR010691">
    <property type="entry name" value="WzyE"/>
</dbReference>
<dbReference type="NCBIfam" id="NF002820">
    <property type="entry name" value="PRK02975.1"/>
    <property type="match status" value="1"/>
</dbReference>
<dbReference type="Pfam" id="PF06899">
    <property type="entry name" value="WzyE"/>
    <property type="match status" value="1"/>
</dbReference>
<accession>A7FD61</accession>
<comment type="function">
    <text evidence="1">Probably involved in the polymerization of enterobacterial common antigen (ECA) trisaccharide repeat units.</text>
</comment>
<comment type="pathway">
    <text evidence="1">Bacterial outer membrane biogenesis; enterobacterial common antigen biosynthesis.</text>
</comment>
<comment type="subunit">
    <text evidence="1">Probably part of a complex composed of WzxE, WzyE and WzzE.</text>
</comment>
<comment type="subcellular location">
    <subcellularLocation>
        <location evidence="1">Cell inner membrane</location>
        <topology evidence="1">Multi-pass membrane protein</topology>
    </subcellularLocation>
</comment>
<comment type="similarity">
    <text evidence="1">Belongs to the WzyE family.</text>
</comment>
<proteinExistence type="inferred from homology"/>
<organism>
    <name type="scientific">Yersinia pseudotuberculosis serotype O:1b (strain IP 31758)</name>
    <dbReference type="NCBI Taxonomy" id="349747"/>
    <lineage>
        <taxon>Bacteria</taxon>
        <taxon>Pseudomonadati</taxon>
        <taxon>Pseudomonadota</taxon>
        <taxon>Gammaproteobacteria</taxon>
        <taxon>Enterobacterales</taxon>
        <taxon>Yersiniaceae</taxon>
        <taxon>Yersinia</taxon>
    </lineage>
</organism>
<gene>
    <name evidence="1" type="primary">wzyE</name>
    <name type="ordered locus">YpsIP31758_0192</name>
</gene>